<accession>B5E3L5</accession>
<comment type="function">
    <text evidence="1">Catalyzes a reversible aldol reaction between acetaldehyde and D-glyceraldehyde 3-phosphate to generate 2-deoxy-D-ribose 5-phosphate.</text>
</comment>
<comment type="catalytic activity">
    <reaction evidence="1">
        <text>2-deoxy-D-ribose 5-phosphate = D-glyceraldehyde 3-phosphate + acetaldehyde</text>
        <dbReference type="Rhea" id="RHEA:12821"/>
        <dbReference type="ChEBI" id="CHEBI:15343"/>
        <dbReference type="ChEBI" id="CHEBI:59776"/>
        <dbReference type="ChEBI" id="CHEBI:62877"/>
        <dbReference type="EC" id="4.1.2.4"/>
    </reaction>
</comment>
<comment type="pathway">
    <text evidence="1">Carbohydrate degradation; 2-deoxy-D-ribose 1-phosphate degradation; D-glyceraldehyde 3-phosphate and acetaldehyde from 2-deoxy-alpha-D-ribose 1-phosphate: step 2/2.</text>
</comment>
<comment type="subcellular location">
    <subcellularLocation>
        <location evidence="1">Cytoplasm</location>
    </subcellularLocation>
</comment>
<comment type="similarity">
    <text evidence="1">Belongs to the DeoC/FbaB aldolase family. DeoC type 1 subfamily.</text>
</comment>
<keyword id="KW-0963">Cytoplasm</keyword>
<keyword id="KW-0456">Lyase</keyword>
<keyword id="KW-0704">Schiff base</keyword>
<proteinExistence type="inferred from homology"/>
<name>DEOC_STRP4</name>
<evidence type="ECO:0000255" key="1">
    <source>
        <dbReference type="HAMAP-Rule" id="MF_00114"/>
    </source>
</evidence>
<feature type="chain" id="PRO_1000094856" description="Deoxyribose-phosphate aldolase">
    <location>
        <begin position="1"/>
        <end position="220"/>
    </location>
</feature>
<feature type="active site" description="Proton donor/acceptor" evidence="1">
    <location>
        <position position="89"/>
    </location>
</feature>
<feature type="active site" description="Schiff-base intermediate with acetaldehyde" evidence="1">
    <location>
        <position position="151"/>
    </location>
</feature>
<feature type="active site" description="Proton donor/acceptor" evidence="1">
    <location>
        <position position="180"/>
    </location>
</feature>
<organism>
    <name type="scientific">Streptococcus pneumoniae serotype 19F (strain G54)</name>
    <dbReference type="NCBI Taxonomy" id="512566"/>
    <lineage>
        <taxon>Bacteria</taxon>
        <taxon>Bacillati</taxon>
        <taxon>Bacillota</taxon>
        <taxon>Bacilli</taxon>
        <taxon>Lactobacillales</taxon>
        <taxon>Streptococcaceae</taxon>
        <taxon>Streptococcus</taxon>
    </lineage>
</organism>
<reference key="1">
    <citation type="journal article" date="2001" name="Microb. Drug Resist.">
        <title>Annotated draft genomic sequence from a Streptococcus pneumoniae type 19F clinical isolate.</title>
        <authorList>
            <person name="Dopazo J."/>
            <person name="Mendoza A."/>
            <person name="Herrero J."/>
            <person name="Caldara F."/>
            <person name="Humbert Y."/>
            <person name="Friedli L."/>
            <person name="Guerrier M."/>
            <person name="Grand-Schenk E."/>
            <person name="Gandin C."/>
            <person name="de Francesco M."/>
            <person name="Polissi A."/>
            <person name="Buell G."/>
            <person name="Feger G."/>
            <person name="Garcia E."/>
            <person name="Peitsch M."/>
            <person name="Garcia-Bustos J.F."/>
        </authorList>
    </citation>
    <scope>NUCLEOTIDE SEQUENCE [LARGE SCALE GENOMIC DNA]</scope>
    <source>
        <strain>G54</strain>
    </source>
</reference>
<reference key="2">
    <citation type="submission" date="2008-03" db="EMBL/GenBank/DDBJ databases">
        <title>Pneumococcal beta glucoside metabolism investigated by whole genome comparison.</title>
        <authorList>
            <person name="Mulas L."/>
            <person name="Trappetti C."/>
            <person name="Hakenbeck R."/>
            <person name="Iannelli F."/>
            <person name="Pozzi G."/>
            <person name="Davidsen T.M."/>
            <person name="Tettelin H."/>
            <person name="Oggioni M."/>
        </authorList>
    </citation>
    <scope>NUCLEOTIDE SEQUENCE [LARGE SCALE GENOMIC DNA]</scope>
    <source>
        <strain>G54</strain>
    </source>
</reference>
<dbReference type="EC" id="4.1.2.4" evidence="1"/>
<dbReference type="EMBL" id="CP001015">
    <property type="protein sequence ID" value="ACF55436.1"/>
    <property type="molecule type" value="Genomic_DNA"/>
</dbReference>
<dbReference type="SMR" id="B5E3L5"/>
<dbReference type="KEGG" id="spx:SPG_0763"/>
<dbReference type="HOGENOM" id="CLU_053595_0_1_9"/>
<dbReference type="UniPathway" id="UPA00002">
    <property type="reaction ID" value="UER00468"/>
</dbReference>
<dbReference type="GO" id="GO:0005737">
    <property type="term" value="C:cytoplasm"/>
    <property type="evidence" value="ECO:0007669"/>
    <property type="project" value="UniProtKB-SubCell"/>
</dbReference>
<dbReference type="GO" id="GO:0004139">
    <property type="term" value="F:deoxyribose-phosphate aldolase activity"/>
    <property type="evidence" value="ECO:0007669"/>
    <property type="project" value="UniProtKB-UniRule"/>
</dbReference>
<dbReference type="GO" id="GO:0006018">
    <property type="term" value="P:2-deoxyribose 1-phosphate catabolic process"/>
    <property type="evidence" value="ECO:0007669"/>
    <property type="project" value="UniProtKB-UniRule"/>
</dbReference>
<dbReference type="GO" id="GO:0016052">
    <property type="term" value="P:carbohydrate catabolic process"/>
    <property type="evidence" value="ECO:0007669"/>
    <property type="project" value="TreeGrafter"/>
</dbReference>
<dbReference type="GO" id="GO:0009264">
    <property type="term" value="P:deoxyribonucleotide catabolic process"/>
    <property type="evidence" value="ECO:0007669"/>
    <property type="project" value="InterPro"/>
</dbReference>
<dbReference type="CDD" id="cd00959">
    <property type="entry name" value="DeoC"/>
    <property type="match status" value="1"/>
</dbReference>
<dbReference type="FunFam" id="3.20.20.70:FF:000044">
    <property type="entry name" value="Deoxyribose-phosphate aldolase"/>
    <property type="match status" value="1"/>
</dbReference>
<dbReference type="Gene3D" id="3.20.20.70">
    <property type="entry name" value="Aldolase class I"/>
    <property type="match status" value="1"/>
</dbReference>
<dbReference type="HAMAP" id="MF_00114">
    <property type="entry name" value="DeoC_type1"/>
    <property type="match status" value="1"/>
</dbReference>
<dbReference type="InterPro" id="IPR013785">
    <property type="entry name" value="Aldolase_TIM"/>
</dbReference>
<dbReference type="InterPro" id="IPR011343">
    <property type="entry name" value="DeoC"/>
</dbReference>
<dbReference type="InterPro" id="IPR002915">
    <property type="entry name" value="DeoC/FbaB/LacD_aldolase"/>
</dbReference>
<dbReference type="InterPro" id="IPR028581">
    <property type="entry name" value="DeoC_typeI"/>
</dbReference>
<dbReference type="NCBIfam" id="TIGR00126">
    <property type="entry name" value="deoC"/>
    <property type="match status" value="1"/>
</dbReference>
<dbReference type="PANTHER" id="PTHR10889">
    <property type="entry name" value="DEOXYRIBOSE-PHOSPHATE ALDOLASE"/>
    <property type="match status" value="1"/>
</dbReference>
<dbReference type="PANTHER" id="PTHR10889:SF1">
    <property type="entry name" value="DEOXYRIBOSE-PHOSPHATE ALDOLASE"/>
    <property type="match status" value="1"/>
</dbReference>
<dbReference type="Pfam" id="PF01791">
    <property type="entry name" value="DeoC"/>
    <property type="match status" value="1"/>
</dbReference>
<dbReference type="PIRSF" id="PIRSF001357">
    <property type="entry name" value="DeoC"/>
    <property type="match status" value="1"/>
</dbReference>
<dbReference type="SMART" id="SM01133">
    <property type="entry name" value="DeoC"/>
    <property type="match status" value="1"/>
</dbReference>
<dbReference type="SUPFAM" id="SSF51569">
    <property type="entry name" value="Aldolase"/>
    <property type="match status" value="1"/>
</dbReference>
<gene>
    <name evidence="1" type="primary">deoC</name>
    <name type="ordered locus">SPG_0763</name>
</gene>
<sequence length="220" mass="23058">MKLNKYIDHTLLKQDAKKKQIDSLLSEAREYGFASVCVNPTWVEHAKKGLEGTDVKVCTVVGFPLGATTSTVKAFETKEAIQNGADEIDMVINVGALKSGDLALVESDIRAVVEASGDKLVKVIIEACLLTDQEKVLACQLAQKAGADFVKTSTGFSTGGATIADVRLMRETVGPDMGVKAAGGARSYADALTFVEAGATRIGTSAGVAILKGELADGDY</sequence>
<protein>
    <recommendedName>
        <fullName evidence="1">Deoxyribose-phosphate aldolase</fullName>
        <shortName evidence="1">DERA</shortName>
        <ecNumber evidence="1">4.1.2.4</ecNumber>
    </recommendedName>
    <alternativeName>
        <fullName evidence="1">2-deoxy-D-ribose 5-phosphate aldolase</fullName>
    </alternativeName>
    <alternativeName>
        <fullName evidence="1">Phosphodeoxyriboaldolase</fullName>
        <shortName evidence="1">Deoxyriboaldolase</shortName>
    </alternativeName>
</protein>